<keyword id="KW-0687">Ribonucleoprotein</keyword>
<keyword id="KW-0689">Ribosomal protein</keyword>
<keyword id="KW-0694">RNA-binding</keyword>
<keyword id="KW-0699">rRNA-binding</keyword>
<reference key="1">
    <citation type="journal article" date="2002" name="Proc. Natl. Acad. Sci. U.S.A.">
        <title>Genome sequence of a serotype M3 strain of group A Streptococcus: phage-encoded toxins, the high-virulence phenotype, and clone emergence.</title>
        <authorList>
            <person name="Beres S.B."/>
            <person name="Sylva G.L."/>
            <person name="Barbian K.D."/>
            <person name="Lei B."/>
            <person name="Hoff J.S."/>
            <person name="Mammarella N.D."/>
            <person name="Liu M.-Y."/>
            <person name="Smoot J.C."/>
            <person name="Porcella S.F."/>
            <person name="Parkins L.D."/>
            <person name="Campbell D.S."/>
            <person name="Smith T.M."/>
            <person name="McCormick J.K."/>
            <person name="Leung D.Y.M."/>
            <person name="Schlievert P.M."/>
            <person name="Musser J.M."/>
        </authorList>
    </citation>
    <scope>NUCLEOTIDE SEQUENCE [LARGE SCALE GENOMIC DNA]</scope>
    <source>
        <strain>ATCC BAA-595 / MGAS315</strain>
    </source>
</reference>
<feature type="chain" id="PRO_0000125240" description="Large ribosomal subunit protein uL22">
    <location>
        <begin position="1"/>
        <end position="114"/>
    </location>
</feature>
<accession>P0DE22</accession>
<accession>Q79YR8</accession>
<accession>Q7CFL3</accession>
<gene>
    <name evidence="1" type="primary">rplV</name>
    <name type="ordered locus">SpyM3_0045</name>
</gene>
<organism>
    <name type="scientific">Streptococcus pyogenes serotype M3 (strain ATCC BAA-595 / MGAS315)</name>
    <dbReference type="NCBI Taxonomy" id="198466"/>
    <lineage>
        <taxon>Bacteria</taxon>
        <taxon>Bacillati</taxon>
        <taxon>Bacillota</taxon>
        <taxon>Bacilli</taxon>
        <taxon>Lactobacillales</taxon>
        <taxon>Streptococcaceae</taxon>
        <taxon>Streptococcus</taxon>
    </lineage>
</organism>
<name>RL22_STRP3</name>
<proteinExistence type="inferred from homology"/>
<protein>
    <recommendedName>
        <fullName evidence="1">Large ribosomal subunit protein uL22</fullName>
    </recommendedName>
    <alternativeName>
        <fullName evidence="2">50S ribosomal protein L22</fullName>
    </alternativeName>
</protein>
<dbReference type="EMBL" id="AE014074">
    <property type="protein sequence ID" value="AAM78652.1"/>
    <property type="molecule type" value="Genomic_DNA"/>
</dbReference>
<dbReference type="RefSeq" id="WP_002986651.1">
    <property type="nucleotide sequence ID" value="NC_004070.1"/>
</dbReference>
<dbReference type="SMR" id="P0DE22"/>
<dbReference type="GeneID" id="83703909"/>
<dbReference type="KEGG" id="spg:SpyM3_0045"/>
<dbReference type="HOGENOM" id="CLU_083987_3_3_9"/>
<dbReference type="Proteomes" id="UP000000564">
    <property type="component" value="Chromosome"/>
</dbReference>
<dbReference type="GO" id="GO:0022625">
    <property type="term" value="C:cytosolic large ribosomal subunit"/>
    <property type="evidence" value="ECO:0007669"/>
    <property type="project" value="TreeGrafter"/>
</dbReference>
<dbReference type="GO" id="GO:0019843">
    <property type="term" value="F:rRNA binding"/>
    <property type="evidence" value="ECO:0007669"/>
    <property type="project" value="UniProtKB-UniRule"/>
</dbReference>
<dbReference type="GO" id="GO:0003735">
    <property type="term" value="F:structural constituent of ribosome"/>
    <property type="evidence" value="ECO:0007669"/>
    <property type="project" value="InterPro"/>
</dbReference>
<dbReference type="GO" id="GO:0006412">
    <property type="term" value="P:translation"/>
    <property type="evidence" value="ECO:0007669"/>
    <property type="project" value="UniProtKB-UniRule"/>
</dbReference>
<dbReference type="CDD" id="cd00336">
    <property type="entry name" value="Ribosomal_L22"/>
    <property type="match status" value="1"/>
</dbReference>
<dbReference type="FunFam" id="3.90.470.10:FF:000001">
    <property type="entry name" value="50S ribosomal protein L22"/>
    <property type="match status" value="1"/>
</dbReference>
<dbReference type="Gene3D" id="3.90.470.10">
    <property type="entry name" value="Ribosomal protein L22/L17"/>
    <property type="match status" value="1"/>
</dbReference>
<dbReference type="HAMAP" id="MF_01331_B">
    <property type="entry name" value="Ribosomal_uL22_B"/>
    <property type="match status" value="1"/>
</dbReference>
<dbReference type="InterPro" id="IPR001063">
    <property type="entry name" value="Ribosomal_uL22"/>
</dbReference>
<dbReference type="InterPro" id="IPR005727">
    <property type="entry name" value="Ribosomal_uL22_bac/chlpt-type"/>
</dbReference>
<dbReference type="InterPro" id="IPR047867">
    <property type="entry name" value="Ribosomal_uL22_bac/org-type"/>
</dbReference>
<dbReference type="InterPro" id="IPR018260">
    <property type="entry name" value="Ribosomal_uL22_CS"/>
</dbReference>
<dbReference type="InterPro" id="IPR036394">
    <property type="entry name" value="Ribosomal_uL22_sf"/>
</dbReference>
<dbReference type="NCBIfam" id="TIGR01044">
    <property type="entry name" value="rplV_bact"/>
    <property type="match status" value="1"/>
</dbReference>
<dbReference type="PANTHER" id="PTHR13501">
    <property type="entry name" value="CHLOROPLAST 50S RIBOSOMAL PROTEIN L22-RELATED"/>
    <property type="match status" value="1"/>
</dbReference>
<dbReference type="PANTHER" id="PTHR13501:SF8">
    <property type="entry name" value="LARGE RIBOSOMAL SUBUNIT PROTEIN UL22M"/>
    <property type="match status" value="1"/>
</dbReference>
<dbReference type="Pfam" id="PF00237">
    <property type="entry name" value="Ribosomal_L22"/>
    <property type="match status" value="1"/>
</dbReference>
<dbReference type="SUPFAM" id="SSF54843">
    <property type="entry name" value="Ribosomal protein L22"/>
    <property type="match status" value="1"/>
</dbReference>
<dbReference type="PROSITE" id="PS00464">
    <property type="entry name" value="RIBOSOMAL_L22"/>
    <property type="match status" value="1"/>
</dbReference>
<comment type="function">
    <text evidence="1">This protein binds specifically to 23S rRNA; its binding is stimulated by other ribosomal proteins, e.g. L4, L17, and L20. It is important during the early stages of 50S assembly. It makes multiple contacts with different domains of the 23S rRNA in the assembled 50S subunit and ribosome (By similarity).</text>
</comment>
<comment type="function">
    <text evidence="1">The globular domain of the protein is located near the polypeptide exit tunnel on the outside of the subunit, while an extended beta-hairpin is found that lines the wall of the exit tunnel in the center of the 70S ribosome.</text>
</comment>
<comment type="subunit">
    <text evidence="1">Part of the 50S ribosomal subunit.</text>
</comment>
<comment type="similarity">
    <text evidence="1">Belongs to the universal ribosomal protein uL22 family.</text>
</comment>
<sequence>MAEITSAKAMARTVRVSPRKTRLVLDLIRGKKVADAIAILKFTPNKAARVIEKTLNSAIANAENNFGLEKANLVVSETFANEGPTMKRFRPRAKGSASPINKRTTHVTVVVSEK</sequence>
<evidence type="ECO:0000255" key="1">
    <source>
        <dbReference type="HAMAP-Rule" id="MF_01331"/>
    </source>
</evidence>
<evidence type="ECO:0000305" key="2"/>